<dbReference type="EC" id="3.6.4.13"/>
<dbReference type="EMBL" id="AAFI02000023">
    <property type="protein sequence ID" value="EAL68101.1"/>
    <property type="molecule type" value="Genomic_DNA"/>
</dbReference>
<dbReference type="EMBL" id="X81824">
    <property type="protein sequence ID" value="CAA57418.1"/>
    <property type="molecule type" value="mRNA"/>
</dbReference>
<dbReference type="RefSeq" id="XP_642321.1">
    <property type="nucleotide sequence ID" value="XM_637229.1"/>
</dbReference>
<dbReference type="SMR" id="Q54Y81"/>
<dbReference type="FunCoup" id="Q54Y81">
    <property type="interactions" value="705"/>
</dbReference>
<dbReference type="STRING" id="44689.Q54Y81"/>
<dbReference type="PaxDb" id="44689-DDB0219950"/>
<dbReference type="EnsemblProtists" id="EAL68101">
    <property type="protein sequence ID" value="EAL68101"/>
    <property type="gene ID" value="DDB_G0277857"/>
</dbReference>
<dbReference type="GeneID" id="8621527"/>
<dbReference type="KEGG" id="ddi:DDB_G0277857"/>
<dbReference type="dictyBase" id="DDB_G0277857">
    <property type="gene designation" value="helB2"/>
</dbReference>
<dbReference type="VEuPathDB" id="AmoebaDB:DDB_G0277857"/>
<dbReference type="eggNOG" id="KOG0333">
    <property type="taxonomic scope" value="Eukaryota"/>
</dbReference>
<dbReference type="HOGENOM" id="CLU_003041_11_2_1"/>
<dbReference type="InParanoid" id="Q54Y81"/>
<dbReference type="OMA" id="ARDIKHM"/>
<dbReference type="PhylomeDB" id="Q54Y81"/>
<dbReference type="PRO" id="PR:Q54Y81"/>
<dbReference type="Proteomes" id="UP000002195">
    <property type="component" value="Chromosome 3"/>
</dbReference>
<dbReference type="GO" id="GO:0071013">
    <property type="term" value="C:catalytic step 2 spliceosome"/>
    <property type="evidence" value="ECO:0000318"/>
    <property type="project" value="GO_Central"/>
</dbReference>
<dbReference type="GO" id="GO:0005737">
    <property type="term" value="C:cytoplasm"/>
    <property type="evidence" value="ECO:0007669"/>
    <property type="project" value="UniProtKB-SubCell"/>
</dbReference>
<dbReference type="GO" id="GO:0005524">
    <property type="term" value="F:ATP binding"/>
    <property type="evidence" value="ECO:0007669"/>
    <property type="project" value="UniProtKB-KW"/>
</dbReference>
<dbReference type="GO" id="GO:0016887">
    <property type="term" value="F:ATP hydrolysis activity"/>
    <property type="evidence" value="ECO:0007669"/>
    <property type="project" value="RHEA"/>
</dbReference>
<dbReference type="GO" id="GO:0003729">
    <property type="term" value="F:mRNA binding"/>
    <property type="evidence" value="ECO:0000318"/>
    <property type="project" value="GO_Central"/>
</dbReference>
<dbReference type="GO" id="GO:0003724">
    <property type="term" value="F:RNA helicase activity"/>
    <property type="evidence" value="ECO:0007669"/>
    <property type="project" value="UniProtKB-EC"/>
</dbReference>
<dbReference type="GO" id="GO:0000398">
    <property type="term" value="P:mRNA splicing, via spliceosome"/>
    <property type="evidence" value="ECO:0000318"/>
    <property type="project" value="GO_Central"/>
</dbReference>
<dbReference type="CDD" id="cd17945">
    <property type="entry name" value="DEADc_DDX23"/>
    <property type="match status" value="1"/>
</dbReference>
<dbReference type="CDD" id="cd18787">
    <property type="entry name" value="SF2_C_DEAD"/>
    <property type="match status" value="1"/>
</dbReference>
<dbReference type="Gene3D" id="3.40.50.300">
    <property type="entry name" value="P-loop containing nucleotide triphosphate hydrolases"/>
    <property type="match status" value="2"/>
</dbReference>
<dbReference type="InterPro" id="IPR011545">
    <property type="entry name" value="DEAD/DEAH_box_helicase_dom"/>
</dbReference>
<dbReference type="InterPro" id="IPR014001">
    <property type="entry name" value="Helicase_ATP-bd"/>
</dbReference>
<dbReference type="InterPro" id="IPR001650">
    <property type="entry name" value="Helicase_C-like"/>
</dbReference>
<dbReference type="InterPro" id="IPR027417">
    <property type="entry name" value="P-loop_NTPase"/>
</dbReference>
<dbReference type="InterPro" id="IPR014014">
    <property type="entry name" value="RNA_helicase_DEAD_Q_motif"/>
</dbReference>
<dbReference type="PANTHER" id="PTHR47958">
    <property type="entry name" value="ATP-DEPENDENT RNA HELICASE DBP3"/>
    <property type="match status" value="1"/>
</dbReference>
<dbReference type="Pfam" id="PF25430">
    <property type="entry name" value="DDX23"/>
    <property type="match status" value="1"/>
</dbReference>
<dbReference type="Pfam" id="PF00270">
    <property type="entry name" value="DEAD"/>
    <property type="match status" value="1"/>
</dbReference>
<dbReference type="Pfam" id="PF00271">
    <property type="entry name" value="Helicase_C"/>
    <property type="match status" value="1"/>
</dbReference>
<dbReference type="SMART" id="SM00487">
    <property type="entry name" value="DEXDc"/>
    <property type="match status" value="1"/>
</dbReference>
<dbReference type="SMART" id="SM00490">
    <property type="entry name" value="HELICc"/>
    <property type="match status" value="1"/>
</dbReference>
<dbReference type="SUPFAM" id="SSF52540">
    <property type="entry name" value="P-loop containing nucleoside triphosphate hydrolases"/>
    <property type="match status" value="1"/>
</dbReference>
<dbReference type="PROSITE" id="PS51192">
    <property type="entry name" value="HELICASE_ATP_BIND_1"/>
    <property type="match status" value="1"/>
</dbReference>
<dbReference type="PROSITE" id="PS51194">
    <property type="entry name" value="HELICASE_CTER"/>
    <property type="match status" value="1"/>
</dbReference>
<dbReference type="PROSITE" id="PS51195">
    <property type="entry name" value="Q_MOTIF"/>
    <property type="match status" value="1"/>
</dbReference>
<comment type="function">
    <text evidence="1">Probable ATP-dependent RNA helicase which may be involved in mRNA splicing.</text>
</comment>
<comment type="catalytic activity">
    <reaction>
        <text>ATP + H2O = ADP + phosphate + H(+)</text>
        <dbReference type="Rhea" id="RHEA:13065"/>
        <dbReference type="ChEBI" id="CHEBI:15377"/>
        <dbReference type="ChEBI" id="CHEBI:15378"/>
        <dbReference type="ChEBI" id="CHEBI:30616"/>
        <dbReference type="ChEBI" id="CHEBI:43474"/>
        <dbReference type="ChEBI" id="CHEBI:456216"/>
        <dbReference type="EC" id="3.6.4.13"/>
    </reaction>
</comment>
<comment type="subcellular location">
    <subcellularLocation>
        <location evidence="1">Cytoplasm</location>
    </subcellularLocation>
    <subcellularLocation>
        <location evidence="1">Nucleus</location>
    </subcellularLocation>
</comment>
<comment type="domain">
    <text>The Q motif is unique to and characteristic of the DEAD box family of RNA helicases and controls ATP binding and hydrolysis.</text>
</comment>
<comment type="similarity">
    <text evidence="5">Belongs to the DEAD box helicase family. DDX23/PRP28 subfamily.</text>
</comment>
<name>DDX23_DICDI</name>
<proteinExistence type="evidence at transcript level"/>
<protein>
    <recommendedName>
        <fullName>ATP-dependent RNA helicase ddx23</fullName>
        <ecNumber>3.6.4.13</ecNumber>
    </recommendedName>
    <alternativeName>
        <fullName>ATP-dependent RNA helicase helB2</fullName>
    </alternativeName>
    <alternativeName>
        <fullName>DEAD box protein 23</fullName>
    </alternativeName>
</protein>
<organism>
    <name type="scientific">Dictyostelium discoideum</name>
    <name type="common">Social amoeba</name>
    <dbReference type="NCBI Taxonomy" id="44689"/>
    <lineage>
        <taxon>Eukaryota</taxon>
        <taxon>Amoebozoa</taxon>
        <taxon>Evosea</taxon>
        <taxon>Eumycetozoa</taxon>
        <taxon>Dictyostelia</taxon>
        <taxon>Dictyosteliales</taxon>
        <taxon>Dictyosteliaceae</taxon>
        <taxon>Dictyostelium</taxon>
    </lineage>
</organism>
<accession>Q54Y81</accession>
<accession>Q23910</accession>
<sequence length="834" mass="95823">MDPPKLTFISKRDTKKKDEVNKEQPTKNLKILDLFSNDEEFSNPTQEEPTNTLQEKLMNVDPLEFFSKGGLKEEQKKERDDHRDDYRDSRDRDRDYRDNGGRDRDRDYRDGGGGGGGRDRDRNRDRDRDRDRDYRDGGGGRDRYRDNDRYRDTDRYRDNDRRDGSGSGSSRRRDERRENSGRRDYRDNDRRDDRRDNGRYGRDNDNSGGGGSGKNSSDKKEEINPVSNNNDIHKDRIKRDTTQFSHKVFEQINNKRDREDPELRDIKVDYMGIKRDENRKKIKGEKGKFVFEWDSSEDTSSDYNTLYTKKLEIQPQFGHGNFGGYEKNNNNNGNHYNGNIYNNNNNNNNNNNNNNNINNNNNGSMIGGKQISELPDTHWSKKPLKSMTKRDWHIFKEDFNISTKGGIAPNPIRTWQESNLPREILEAIRQLGYEKPSPIQMQSIPISLTGRDILGIAETGSGKTCAFVIPMLIYISKQPRLTKDTEADGPYALVMAPTRELVQQIEKETRNFAQHFGFRVVSLVGGQSIEDQAYQVSKGCEIIIATPGRLNDCLEKRYLVLNQCNYIVLDEADMMIDLGFEPQVTSVLDAMPSSFLKSEDDEMAEKQESDRSHIYRTTILFSATMPPLVEKLSKKYLRRPCTITIGEAGKVVDRIRQTVIFVKSENDKKEHLTQLIKDGPPPPIIIFVNKKKHCDIIAPVLEECRVSYTILHSGRSQEQREAALEGFKKRKYEVLIATGVASRGIHVDGVTHVINFDIPKNIEDYTHRIGRTGRAGSAGLASSFITDKDVEIMYDLKQILTSTNNIVPIELLKHPSSQQKHGSSKDHNKSVIFK</sequence>
<gene>
    <name type="primary">helB2</name>
    <name type="synonym">ddx23</name>
    <name type="synonym">hel2B</name>
    <name type="ORF">DDB_G0277857</name>
</gene>
<evidence type="ECO:0000250" key="1"/>
<evidence type="ECO:0000255" key="2">
    <source>
        <dbReference type="PROSITE-ProRule" id="PRU00541"/>
    </source>
</evidence>
<evidence type="ECO:0000255" key="3">
    <source>
        <dbReference type="PROSITE-ProRule" id="PRU00542"/>
    </source>
</evidence>
<evidence type="ECO:0000256" key="4">
    <source>
        <dbReference type="SAM" id="MobiDB-lite"/>
    </source>
</evidence>
<evidence type="ECO:0000305" key="5"/>
<reference key="1">
    <citation type="journal article" date="2005" name="Nature">
        <title>The genome of the social amoeba Dictyostelium discoideum.</title>
        <authorList>
            <person name="Eichinger L."/>
            <person name="Pachebat J.A."/>
            <person name="Gloeckner G."/>
            <person name="Rajandream M.A."/>
            <person name="Sucgang R."/>
            <person name="Berriman M."/>
            <person name="Song J."/>
            <person name="Olsen R."/>
            <person name="Szafranski K."/>
            <person name="Xu Q."/>
            <person name="Tunggal B."/>
            <person name="Kummerfeld S."/>
            <person name="Madera M."/>
            <person name="Konfortov B.A."/>
            <person name="Rivero F."/>
            <person name="Bankier A.T."/>
            <person name="Lehmann R."/>
            <person name="Hamlin N."/>
            <person name="Davies R."/>
            <person name="Gaudet P."/>
            <person name="Fey P."/>
            <person name="Pilcher K."/>
            <person name="Chen G."/>
            <person name="Saunders D."/>
            <person name="Sodergren E.J."/>
            <person name="Davis P."/>
            <person name="Kerhornou A."/>
            <person name="Nie X."/>
            <person name="Hall N."/>
            <person name="Anjard C."/>
            <person name="Hemphill L."/>
            <person name="Bason N."/>
            <person name="Farbrother P."/>
            <person name="Desany B."/>
            <person name="Just E."/>
            <person name="Morio T."/>
            <person name="Rost R."/>
            <person name="Churcher C.M."/>
            <person name="Cooper J."/>
            <person name="Haydock S."/>
            <person name="van Driessche N."/>
            <person name="Cronin A."/>
            <person name="Goodhead I."/>
            <person name="Muzny D.M."/>
            <person name="Mourier T."/>
            <person name="Pain A."/>
            <person name="Lu M."/>
            <person name="Harper D."/>
            <person name="Lindsay R."/>
            <person name="Hauser H."/>
            <person name="James K.D."/>
            <person name="Quiles M."/>
            <person name="Madan Babu M."/>
            <person name="Saito T."/>
            <person name="Buchrieser C."/>
            <person name="Wardroper A."/>
            <person name="Felder M."/>
            <person name="Thangavelu M."/>
            <person name="Johnson D."/>
            <person name="Knights A."/>
            <person name="Loulseged H."/>
            <person name="Mungall K.L."/>
            <person name="Oliver K."/>
            <person name="Price C."/>
            <person name="Quail M.A."/>
            <person name="Urushihara H."/>
            <person name="Hernandez J."/>
            <person name="Rabbinowitsch E."/>
            <person name="Steffen D."/>
            <person name="Sanders M."/>
            <person name="Ma J."/>
            <person name="Kohara Y."/>
            <person name="Sharp S."/>
            <person name="Simmonds M.N."/>
            <person name="Spiegler S."/>
            <person name="Tivey A."/>
            <person name="Sugano S."/>
            <person name="White B."/>
            <person name="Walker D."/>
            <person name="Woodward J.R."/>
            <person name="Winckler T."/>
            <person name="Tanaka Y."/>
            <person name="Shaulsky G."/>
            <person name="Schleicher M."/>
            <person name="Weinstock G.M."/>
            <person name="Rosenthal A."/>
            <person name="Cox E.C."/>
            <person name="Chisholm R.L."/>
            <person name="Gibbs R.A."/>
            <person name="Loomis W.F."/>
            <person name="Platzer M."/>
            <person name="Kay R.R."/>
            <person name="Williams J.G."/>
            <person name="Dear P.H."/>
            <person name="Noegel A.A."/>
            <person name="Barrell B.G."/>
            <person name="Kuspa A."/>
        </authorList>
    </citation>
    <scope>NUCLEOTIDE SEQUENCE [LARGE SCALE GENOMIC DNA]</scope>
    <source>
        <strain>AX4</strain>
    </source>
</reference>
<reference key="2">
    <citation type="journal article" date="1994" name="Biol. Chem. Hoppe-Seyler">
        <title>Developmental regulation of DEAD box proteins and cloning of putative RNA helicase genes from Dictyostelium discoideum.</title>
        <authorList>
            <person name="Mahal B."/>
            <person name="Nellen W."/>
        </authorList>
    </citation>
    <scope>NUCLEOTIDE SEQUENCE [MRNA] OF 272-834</scope>
    <source>
        <strain>AX2</strain>
    </source>
</reference>
<feature type="chain" id="PRO_0000327433" description="ATP-dependent RNA helicase ddx23">
    <location>
        <begin position="1"/>
        <end position="834"/>
    </location>
</feature>
<feature type="domain" description="Helicase ATP-binding" evidence="2">
    <location>
        <begin position="444"/>
        <end position="643"/>
    </location>
</feature>
<feature type="domain" description="Helicase C-terminal" evidence="3">
    <location>
        <begin position="654"/>
        <end position="815"/>
    </location>
</feature>
<feature type="region of interest" description="Disordered" evidence="4">
    <location>
        <begin position="1"/>
        <end position="245"/>
    </location>
</feature>
<feature type="region of interest" description="Disordered" evidence="4">
    <location>
        <begin position="322"/>
        <end position="371"/>
    </location>
</feature>
<feature type="region of interest" description="Disordered" evidence="4">
    <location>
        <begin position="813"/>
        <end position="834"/>
    </location>
</feature>
<feature type="short sequence motif" description="Q motif">
    <location>
        <begin position="413"/>
        <end position="441"/>
    </location>
</feature>
<feature type="short sequence motif" description="DEAD box">
    <location>
        <begin position="570"/>
        <end position="573"/>
    </location>
</feature>
<feature type="compositionally biased region" description="Basic and acidic residues" evidence="4">
    <location>
        <begin position="10"/>
        <end position="25"/>
    </location>
</feature>
<feature type="compositionally biased region" description="Polar residues" evidence="4">
    <location>
        <begin position="42"/>
        <end position="54"/>
    </location>
</feature>
<feature type="compositionally biased region" description="Basic and acidic residues" evidence="4">
    <location>
        <begin position="70"/>
        <end position="110"/>
    </location>
</feature>
<feature type="compositionally biased region" description="Basic and acidic residues" evidence="4">
    <location>
        <begin position="117"/>
        <end position="164"/>
    </location>
</feature>
<feature type="compositionally biased region" description="Basic and acidic residues" evidence="4">
    <location>
        <begin position="171"/>
        <end position="205"/>
    </location>
</feature>
<feature type="compositionally biased region" description="Basic and acidic residues" evidence="4">
    <location>
        <begin position="231"/>
        <end position="245"/>
    </location>
</feature>
<feature type="compositionally biased region" description="Low complexity" evidence="4">
    <location>
        <begin position="328"/>
        <end position="362"/>
    </location>
</feature>
<feature type="compositionally biased region" description="Basic and acidic residues" evidence="4">
    <location>
        <begin position="823"/>
        <end position="834"/>
    </location>
</feature>
<feature type="binding site" evidence="2">
    <location>
        <begin position="457"/>
        <end position="464"/>
    </location>
    <ligand>
        <name>ATP</name>
        <dbReference type="ChEBI" id="CHEBI:30616"/>
    </ligand>
</feature>
<keyword id="KW-0067">ATP-binding</keyword>
<keyword id="KW-0963">Cytoplasm</keyword>
<keyword id="KW-0347">Helicase</keyword>
<keyword id="KW-0378">Hydrolase</keyword>
<keyword id="KW-0507">mRNA processing</keyword>
<keyword id="KW-0508">mRNA splicing</keyword>
<keyword id="KW-0547">Nucleotide-binding</keyword>
<keyword id="KW-0539">Nucleus</keyword>
<keyword id="KW-1185">Reference proteome</keyword>